<dbReference type="EMBL" id="AF215063">
    <property type="protein sequence ID" value="AAG60491.1"/>
    <property type="molecule type" value="mRNA"/>
</dbReference>
<dbReference type="ConoServer" id="750">
    <property type="toxin name" value="Ts6.5 precursor"/>
</dbReference>
<dbReference type="GO" id="GO:0005576">
    <property type="term" value="C:extracellular region"/>
    <property type="evidence" value="ECO:0007669"/>
    <property type="project" value="UniProtKB-SubCell"/>
</dbReference>
<dbReference type="GO" id="GO:0008200">
    <property type="term" value="F:ion channel inhibitor activity"/>
    <property type="evidence" value="ECO:0007669"/>
    <property type="project" value="InterPro"/>
</dbReference>
<dbReference type="GO" id="GO:0090729">
    <property type="term" value="F:toxin activity"/>
    <property type="evidence" value="ECO:0007669"/>
    <property type="project" value="UniProtKB-KW"/>
</dbReference>
<dbReference type="InterPro" id="IPR004214">
    <property type="entry name" value="Conotoxin"/>
</dbReference>
<dbReference type="Pfam" id="PF02950">
    <property type="entry name" value="Conotoxin"/>
    <property type="match status" value="1"/>
</dbReference>
<keyword id="KW-0027">Amidation</keyword>
<keyword id="KW-0165">Cleavage on pair of basic residues</keyword>
<keyword id="KW-1015">Disulfide bond</keyword>
<keyword id="KW-0960">Knottin</keyword>
<keyword id="KW-0528">Neurotoxin</keyword>
<keyword id="KW-0964">Secreted</keyword>
<keyword id="KW-0732">Signal</keyword>
<keyword id="KW-0800">Toxin</keyword>
<reference key="1">
    <citation type="journal article" date="2001" name="Mol. Biol. Evol.">
        <title>Mechanisms for evolving hypervariability: the case of conopeptides.</title>
        <authorList>
            <person name="Conticello S.G."/>
            <person name="Gilad Y."/>
            <person name="Avidan N."/>
            <person name="Ben-Asher E."/>
            <person name="Levy Z."/>
            <person name="Fainzilber M."/>
        </authorList>
    </citation>
    <scope>NUCLEOTIDE SEQUENCE [MRNA]</scope>
    <source>
        <tissue>Venom duct</tissue>
    </source>
</reference>
<accession>Q9BP75</accession>
<feature type="signal peptide" evidence="2">
    <location>
        <begin position="1"/>
        <end position="24"/>
    </location>
</feature>
<feature type="propeptide" id="PRO_0000404864" evidence="1">
    <location>
        <begin position="25"/>
        <end position="44"/>
    </location>
</feature>
<feature type="peptide" id="PRO_0000404865" description="Conotoxin TsMSGL-13">
    <location>
        <begin position="47"/>
        <end position="77"/>
    </location>
</feature>
<feature type="modified residue" description="Phenylalanine amide" evidence="1">
    <location>
        <position position="77"/>
    </location>
</feature>
<feature type="disulfide bond" evidence="1">
    <location>
        <begin position="51"/>
        <end position="63"/>
    </location>
</feature>
<feature type="disulfide bond" evidence="1">
    <location>
        <begin position="55"/>
        <end position="72"/>
    </location>
</feature>
<feature type="disulfide bond" evidence="1">
    <location>
        <begin position="62"/>
        <end position="76"/>
    </location>
</feature>
<protein>
    <recommendedName>
        <fullName>Conotoxin TsMSGL-13</fullName>
    </recommendedName>
</protein>
<proteinExistence type="evidence at transcript level"/>
<comment type="subcellular location">
    <subcellularLocation>
        <location evidence="1">Secreted</location>
    </subcellularLocation>
</comment>
<comment type="tissue specificity">
    <text>Expressed by the venom duct.</text>
</comment>
<comment type="domain">
    <text evidence="1">The presence of a 'disulfide through disulfide knot' structurally defines this protein as a knottin.</text>
</comment>
<comment type="domain">
    <text>The cysteine framework is VI/VII (C-C-CC-C-C).</text>
</comment>
<comment type="similarity">
    <text evidence="3">Belongs to the conotoxin O3 superfamily.</text>
</comment>
<name>O365_CONTS</name>
<organism>
    <name type="scientific">Conus tessulatus</name>
    <name type="common">Tessellate cone</name>
    <dbReference type="NCBI Taxonomy" id="101317"/>
    <lineage>
        <taxon>Eukaryota</taxon>
        <taxon>Metazoa</taxon>
        <taxon>Spiralia</taxon>
        <taxon>Lophotrochozoa</taxon>
        <taxon>Mollusca</taxon>
        <taxon>Gastropoda</taxon>
        <taxon>Caenogastropoda</taxon>
        <taxon>Neogastropoda</taxon>
        <taxon>Conoidea</taxon>
        <taxon>Conidae</taxon>
        <taxon>Conus</taxon>
        <taxon>Tesselliconus</taxon>
    </lineage>
</organism>
<sequence length="78" mass="8844">MSGLGIMVLTLLLFMFMATSHQDAGEKQATQRDAINVRRRRSITRRGDEECNEHCEDRNKECCGRTNGHPRCANVCFG</sequence>
<evidence type="ECO:0000250" key="1"/>
<evidence type="ECO:0000255" key="2"/>
<evidence type="ECO:0000305" key="3"/>